<proteinExistence type="inferred from homology"/>
<name>OBG_RICFE</name>
<sequence>MNFIDEVKICIKGGNGGNGCVSFHREKFIDRGGPDGGDGGRGGSVIFRSNHHLNTLVNYRYKQHFTAENGENGKGSNRSGKSGKSLALDVPIGTQIFSEDGNILLHDFTEDDQSFEIIKGGSGGLGNSHFKTSVNQAPRKRTEGEIAEEMWIHLSLKLLSDVGLVGLPNAGKSTFLSVVTAAKPKIADYPFTTLVPNLGVVYVDDEEFVIADIPGLIEGAHQGHGLGDKFLKHIERCNVLIHLIDGSSNDVMADYNTVRLELESYSDYLKNKIEIICLNKCDVLTDEEIQEKINELQKATNKEVFPISTYTNLGVNKIVKLALKTIKNQE</sequence>
<keyword id="KW-0963">Cytoplasm</keyword>
<keyword id="KW-0342">GTP-binding</keyword>
<keyword id="KW-0378">Hydrolase</keyword>
<keyword id="KW-0460">Magnesium</keyword>
<keyword id="KW-0479">Metal-binding</keyword>
<keyword id="KW-0547">Nucleotide-binding</keyword>
<feature type="chain" id="PRO_0000386203" description="GTPase Obg">
    <location>
        <begin position="1"/>
        <end position="330"/>
    </location>
</feature>
<feature type="domain" description="Obg" evidence="2">
    <location>
        <begin position="1"/>
        <end position="159"/>
    </location>
</feature>
<feature type="domain" description="OBG-type G" evidence="1">
    <location>
        <begin position="160"/>
        <end position="327"/>
    </location>
</feature>
<feature type="binding site" evidence="1">
    <location>
        <begin position="166"/>
        <end position="173"/>
    </location>
    <ligand>
        <name>GTP</name>
        <dbReference type="ChEBI" id="CHEBI:37565"/>
    </ligand>
</feature>
<feature type="binding site" evidence="1">
    <location>
        <position position="173"/>
    </location>
    <ligand>
        <name>Mg(2+)</name>
        <dbReference type="ChEBI" id="CHEBI:18420"/>
    </ligand>
</feature>
<feature type="binding site" evidence="1">
    <location>
        <begin position="191"/>
        <end position="195"/>
    </location>
    <ligand>
        <name>GTP</name>
        <dbReference type="ChEBI" id="CHEBI:37565"/>
    </ligand>
</feature>
<feature type="binding site" evidence="1">
    <location>
        <position position="193"/>
    </location>
    <ligand>
        <name>Mg(2+)</name>
        <dbReference type="ChEBI" id="CHEBI:18420"/>
    </ligand>
</feature>
<feature type="binding site" evidence="1">
    <location>
        <begin position="212"/>
        <end position="215"/>
    </location>
    <ligand>
        <name>GTP</name>
        <dbReference type="ChEBI" id="CHEBI:37565"/>
    </ligand>
</feature>
<feature type="binding site" evidence="1">
    <location>
        <begin position="279"/>
        <end position="282"/>
    </location>
    <ligand>
        <name>GTP</name>
        <dbReference type="ChEBI" id="CHEBI:37565"/>
    </ligand>
</feature>
<feature type="binding site" evidence="1">
    <location>
        <begin position="308"/>
        <end position="310"/>
    </location>
    <ligand>
        <name>GTP</name>
        <dbReference type="ChEBI" id="CHEBI:37565"/>
    </ligand>
</feature>
<evidence type="ECO:0000255" key="1">
    <source>
        <dbReference type="HAMAP-Rule" id="MF_01454"/>
    </source>
</evidence>
<evidence type="ECO:0000255" key="2">
    <source>
        <dbReference type="PROSITE-ProRule" id="PRU01231"/>
    </source>
</evidence>
<gene>
    <name evidence="1" type="primary">obg</name>
    <name type="ordered locus">RF_1337</name>
</gene>
<dbReference type="EC" id="3.6.5.-" evidence="1"/>
<dbReference type="EMBL" id="CP000053">
    <property type="protein sequence ID" value="AAY62188.1"/>
    <property type="molecule type" value="Genomic_DNA"/>
</dbReference>
<dbReference type="SMR" id="Q4UJV1"/>
<dbReference type="STRING" id="315456.RF_1337"/>
<dbReference type="KEGG" id="rfe:RF_1337"/>
<dbReference type="eggNOG" id="COG0536">
    <property type="taxonomic scope" value="Bacteria"/>
</dbReference>
<dbReference type="HOGENOM" id="CLU_011747_2_3_5"/>
<dbReference type="OrthoDB" id="9807318at2"/>
<dbReference type="Proteomes" id="UP000008548">
    <property type="component" value="Chromosome"/>
</dbReference>
<dbReference type="GO" id="GO:0005737">
    <property type="term" value="C:cytoplasm"/>
    <property type="evidence" value="ECO:0007669"/>
    <property type="project" value="UniProtKB-SubCell"/>
</dbReference>
<dbReference type="GO" id="GO:0005525">
    <property type="term" value="F:GTP binding"/>
    <property type="evidence" value="ECO:0007669"/>
    <property type="project" value="UniProtKB-UniRule"/>
</dbReference>
<dbReference type="GO" id="GO:0003924">
    <property type="term" value="F:GTPase activity"/>
    <property type="evidence" value="ECO:0007669"/>
    <property type="project" value="UniProtKB-UniRule"/>
</dbReference>
<dbReference type="GO" id="GO:0000287">
    <property type="term" value="F:magnesium ion binding"/>
    <property type="evidence" value="ECO:0007669"/>
    <property type="project" value="InterPro"/>
</dbReference>
<dbReference type="GO" id="GO:0042254">
    <property type="term" value="P:ribosome biogenesis"/>
    <property type="evidence" value="ECO:0007669"/>
    <property type="project" value="UniProtKB-UniRule"/>
</dbReference>
<dbReference type="CDD" id="cd01898">
    <property type="entry name" value="Obg"/>
    <property type="match status" value="1"/>
</dbReference>
<dbReference type="FunFam" id="2.70.210.12:FF:000001">
    <property type="entry name" value="GTPase Obg"/>
    <property type="match status" value="1"/>
</dbReference>
<dbReference type="Gene3D" id="2.70.210.12">
    <property type="entry name" value="GTP1/OBG domain"/>
    <property type="match status" value="1"/>
</dbReference>
<dbReference type="Gene3D" id="3.40.50.300">
    <property type="entry name" value="P-loop containing nucleotide triphosphate hydrolases"/>
    <property type="match status" value="1"/>
</dbReference>
<dbReference type="HAMAP" id="MF_01454">
    <property type="entry name" value="GTPase_Obg"/>
    <property type="match status" value="1"/>
</dbReference>
<dbReference type="InterPro" id="IPR031167">
    <property type="entry name" value="G_OBG"/>
</dbReference>
<dbReference type="InterPro" id="IPR006073">
    <property type="entry name" value="GTP-bd"/>
</dbReference>
<dbReference type="InterPro" id="IPR014100">
    <property type="entry name" value="GTP-bd_Obg/CgtA"/>
</dbReference>
<dbReference type="InterPro" id="IPR006074">
    <property type="entry name" value="GTP1-OBG_CS"/>
</dbReference>
<dbReference type="InterPro" id="IPR006169">
    <property type="entry name" value="GTP1_OBG_dom"/>
</dbReference>
<dbReference type="InterPro" id="IPR036726">
    <property type="entry name" value="GTP1_OBG_dom_sf"/>
</dbReference>
<dbReference type="InterPro" id="IPR045086">
    <property type="entry name" value="OBG_GTPase"/>
</dbReference>
<dbReference type="InterPro" id="IPR027417">
    <property type="entry name" value="P-loop_NTPase"/>
</dbReference>
<dbReference type="NCBIfam" id="TIGR02729">
    <property type="entry name" value="Obg_CgtA"/>
    <property type="match status" value="1"/>
</dbReference>
<dbReference type="NCBIfam" id="NF008955">
    <property type="entry name" value="PRK12297.1"/>
    <property type="match status" value="1"/>
</dbReference>
<dbReference type="NCBIfam" id="NF008956">
    <property type="entry name" value="PRK12299.1"/>
    <property type="match status" value="1"/>
</dbReference>
<dbReference type="PANTHER" id="PTHR11702">
    <property type="entry name" value="DEVELOPMENTALLY REGULATED GTP-BINDING PROTEIN-RELATED"/>
    <property type="match status" value="1"/>
</dbReference>
<dbReference type="PANTHER" id="PTHR11702:SF31">
    <property type="entry name" value="MITOCHONDRIAL RIBOSOME-ASSOCIATED GTPASE 2"/>
    <property type="match status" value="1"/>
</dbReference>
<dbReference type="Pfam" id="PF01018">
    <property type="entry name" value="GTP1_OBG"/>
    <property type="match status" value="1"/>
</dbReference>
<dbReference type="Pfam" id="PF01926">
    <property type="entry name" value="MMR_HSR1"/>
    <property type="match status" value="1"/>
</dbReference>
<dbReference type="PIRSF" id="PIRSF002401">
    <property type="entry name" value="GTP_bd_Obg/CgtA"/>
    <property type="match status" value="1"/>
</dbReference>
<dbReference type="PRINTS" id="PR00326">
    <property type="entry name" value="GTP1OBG"/>
</dbReference>
<dbReference type="SUPFAM" id="SSF82051">
    <property type="entry name" value="Obg GTP-binding protein N-terminal domain"/>
    <property type="match status" value="1"/>
</dbReference>
<dbReference type="SUPFAM" id="SSF52540">
    <property type="entry name" value="P-loop containing nucleoside triphosphate hydrolases"/>
    <property type="match status" value="1"/>
</dbReference>
<dbReference type="PROSITE" id="PS51710">
    <property type="entry name" value="G_OBG"/>
    <property type="match status" value="1"/>
</dbReference>
<dbReference type="PROSITE" id="PS00905">
    <property type="entry name" value="GTP1_OBG"/>
    <property type="match status" value="1"/>
</dbReference>
<dbReference type="PROSITE" id="PS51883">
    <property type="entry name" value="OBG"/>
    <property type="match status" value="1"/>
</dbReference>
<accession>Q4UJV1</accession>
<reference key="1">
    <citation type="journal article" date="2005" name="PLoS Biol.">
        <title>The genome sequence of Rickettsia felis identifies the first putative conjugative plasmid in an obligate intracellular parasite.</title>
        <authorList>
            <person name="Ogata H."/>
            <person name="Renesto P."/>
            <person name="Audic S."/>
            <person name="Robert C."/>
            <person name="Blanc G."/>
            <person name="Fournier P.-E."/>
            <person name="Parinello H."/>
            <person name="Claverie J.-M."/>
            <person name="Raoult D."/>
        </authorList>
    </citation>
    <scope>NUCLEOTIDE SEQUENCE [LARGE SCALE GENOMIC DNA]</scope>
    <source>
        <strain>ATCC VR-1525 / URRWXCal2</strain>
    </source>
</reference>
<protein>
    <recommendedName>
        <fullName evidence="1">GTPase Obg</fullName>
        <ecNumber evidence="1">3.6.5.-</ecNumber>
    </recommendedName>
    <alternativeName>
        <fullName evidence="1">GTP-binding protein Obg</fullName>
    </alternativeName>
</protein>
<organism>
    <name type="scientific">Rickettsia felis (strain ATCC VR-1525 / URRWXCal2)</name>
    <name type="common">Rickettsia azadi</name>
    <dbReference type="NCBI Taxonomy" id="315456"/>
    <lineage>
        <taxon>Bacteria</taxon>
        <taxon>Pseudomonadati</taxon>
        <taxon>Pseudomonadota</taxon>
        <taxon>Alphaproteobacteria</taxon>
        <taxon>Rickettsiales</taxon>
        <taxon>Rickettsiaceae</taxon>
        <taxon>Rickettsieae</taxon>
        <taxon>Rickettsia</taxon>
        <taxon>spotted fever group</taxon>
    </lineage>
</organism>
<comment type="function">
    <text evidence="1">An essential GTPase which binds GTP, GDP and possibly (p)ppGpp with moderate affinity, with high nucleotide exchange rates and a fairly low GTP hydrolysis rate. Plays a role in control of the cell cycle, stress response, ribosome biogenesis and in those bacteria that undergo differentiation, in morphogenesis control.</text>
</comment>
<comment type="cofactor">
    <cofactor evidence="1">
        <name>Mg(2+)</name>
        <dbReference type="ChEBI" id="CHEBI:18420"/>
    </cofactor>
</comment>
<comment type="subunit">
    <text evidence="1">Monomer.</text>
</comment>
<comment type="subcellular location">
    <subcellularLocation>
        <location evidence="1">Cytoplasm</location>
    </subcellularLocation>
</comment>
<comment type="similarity">
    <text evidence="1">Belongs to the TRAFAC class OBG-HflX-like GTPase superfamily. OBG GTPase family.</text>
</comment>